<reference key="1">
    <citation type="journal article" date="2000" name="Virology">
        <title>A novel lipothrixvirus, SIFV, of the extremely thermophilic crenarchaeon Sulfolobus.</title>
        <authorList>
            <person name="Arnold H.P."/>
            <person name="Zillig W."/>
            <person name="Ziese U."/>
            <person name="Holz I."/>
            <person name="Crosby M."/>
            <person name="Utterback T."/>
            <person name="Weidmann J.F."/>
            <person name="Umayam L.A."/>
            <person name="Teffera K."/>
            <person name="Kristjanson J.K."/>
            <person name="Klenk H.P."/>
            <person name="Nelson K.E."/>
            <person name="Fraser C.M."/>
        </authorList>
    </citation>
    <scope>NUCLEOTIDE SEQUENCE [GENOMIC DNA]</scope>
</reference>
<sequence>MLIAQVIKKGWYIDFKVSSLVDIPTKYLLYTKTIGEEKYGTDAMCHIVFPLRRMEPSFIRGGYNLPTIDKRKRPNQGDGGGIRGHDIGSVWYSSIIFIRGRGGMVWGCSGTTDYMVPPVSGRRGRVYMVDAKQILKLDIDVDVNFYDPNWLLQKKLDMLHALGYQEEEAWWEYSPSGKHIHVIIVLKDPISTKELFDLQFLLGDDHKRVYFNYLRYSVMKEDAVHFNVLYTYKKSLTFSDKLKAIFRHWFKSKQYSKNLRLGQTT</sequence>
<keyword id="KW-1185">Reference proteome</keyword>
<gene>
    <name type="primary">SIFV0030</name>
</gene>
<dbReference type="EMBL" id="AF440571">
    <property type="protein sequence ID" value="AAL27741.1"/>
    <property type="molecule type" value="Genomic_DNA"/>
</dbReference>
<dbReference type="RefSeq" id="NP_445695.1">
    <property type="nucleotide sequence ID" value="NC_003214.2"/>
</dbReference>
<dbReference type="GeneID" id="922329"/>
<dbReference type="KEGG" id="vg:922329"/>
<dbReference type="Proteomes" id="UP000007017">
    <property type="component" value="Segment"/>
</dbReference>
<name>Y030_SIFVH</name>
<accession>Q914K0</accession>
<organismHost>
    <name type="scientific">Saccharolobus islandicus</name>
    <name type="common">Sulfolobus islandicus</name>
    <dbReference type="NCBI Taxonomy" id="43080"/>
</organismHost>
<protein>
    <recommendedName>
        <fullName>Uncharacterized protein 30</fullName>
    </recommendedName>
</protein>
<proteinExistence type="predicted"/>
<organism>
    <name type="scientific">Sulfolobus islandicus filamentous virus (isolate Iceland/Hveragerdi)</name>
    <name type="common">SIFV</name>
    <dbReference type="NCBI Taxonomy" id="654908"/>
    <lineage>
        <taxon>Viruses</taxon>
        <taxon>Adnaviria</taxon>
        <taxon>Zilligvirae</taxon>
        <taxon>Taleaviricota</taxon>
        <taxon>Tokiviricetes</taxon>
        <taxon>Ligamenvirales</taxon>
        <taxon>Lipothrixviridae</taxon>
        <taxon>Betalipothrixvirus</taxon>
        <taxon>Sulfolobus islandicus filamentous virus</taxon>
    </lineage>
</organism>
<feature type="chain" id="PRO_0000385404" description="Uncharacterized protein 30">
    <location>
        <begin position="1"/>
        <end position="265"/>
    </location>
</feature>